<sequence length="170" mass="19733">MKKKNGRDSKELADFALGESQTNYPETYAPEVLEAFDNKNPGKIAWTTFVCTEFTSLCPKTRQPDFAKIFINYIADKKMVESKSLKLYLFSFRNHGDFHEDCVQTICDDLVKLMKPKYIEVIGEFTPRGGIAIYPYANYAAKDKFFQELYKKRMSEYAPGKYSMELSKLY</sequence>
<protein>
    <recommendedName>
        <fullName evidence="1">NADPH-dependent 7-cyano-7-deazaguanine reductase</fullName>
        <ecNumber evidence="1">1.7.1.13</ecNumber>
    </recommendedName>
    <alternativeName>
        <fullName evidence="1">7-cyano-7-carbaguanine reductase</fullName>
    </alternativeName>
    <alternativeName>
        <fullName evidence="1">NADPH-dependent nitrile oxidoreductase</fullName>
    </alternativeName>
    <alternativeName>
        <fullName evidence="1">PreQ(0) reductase</fullName>
    </alternativeName>
</protein>
<accession>Q6MRJ2</accession>
<proteinExistence type="inferred from homology"/>
<keyword id="KW-0963">Cytoplasm</keyword>
<keyword id="KW-0521">NADP</keyword>
<keyword id="KW-0560">Oxidoreductase</keyword>
<keyword id="KW-0671">Queuosine biosynthesis</keyword>
<keyword id="KW-1185">Reference proteome</keyword>
<organism>
    <name type="scientific">Bdellovibrio bacteriovorus (strain ATCC 15356 / DSM 50701 / NCIMB 9529 / HD100)</name>
    <dbReference type="NCBI Taxonomy" id="264462"/>
    <lineage>
        <taxon>Bacteria</taxon>
        <taxon>Pseudomonadati</taxon>
        <taxon>Bdellovibrionota</taxon>
        <taxon>Bdellovibrionia</taxon>
        <taxon>Bdellovibrionales</taxon>
        <taxon>Pseudobdellovibrionaceae</taxon>
        <taxon>Bdellovibrio</taxon>
    </lineage>
</organism>
<reference key="1">
    <citation type="journal article" date="2004" name="Science">
        <title>A predator unmasked: life cycle of Bdellovibrio bacteriovorus from a genomic perspective.</title>
        <authorList>
            <person name="Rendulic S."/>
            <person name="Jagtap P."/>
            <person name="Rosinus A."/>
            <person name="Eppinger M."/>
            <person name="Baar C."/>
            <person name="Lanz C."/>
            <person name="Keller H."/>
            <person name="Lambert C."/>
            <person name="Evans K.J."/>
            <person name="Goesmann A."/>
            <person name="Meyer F."/>
            <person name="Sockett R.E."/>
            <person name="Schuster S.C."/>
        </authorList>
    </citation>
    <scope>NUCLEOTIDE SEQUENCE [LARGE SCALE GENOMIC DNA]</scope>
    <source>
        <strain>ATCC 15356 / DSM 50701 / NCIMB 9529 / HD100</strain>
    </source>
</reference>
<comment type="function">
    <text evidence="1">Catalyzes the NADPH-dependent reduction of 7-cyano-7-deazaguanine (preQ0) to 7-aminomethyl-7-deazaguanine (preQ1).</text>
</comment>
<comment type="catalytic activity">
    <reaction evidence="1">
        <text>7-aminomethyl-7-carbaguanine + 2 NADP(+) = 7-cyano-7-deazaguanine + 2 NADPH + 3 H(+)</text>
        <dbReference type="Rhea" id="RHEA:13409"/>
        <dbReference type="ChEBI" id="CHEBI:15378"/>
        <dbReference type="ChEBI" id="CHEBI:45075"/>
        <dbReference type="ChEBI" id="CHEBI:57783"/>
        <dbReference type="ChEBI" id="CHEBI:58349"/>
        <dbReference type="ChEBI" id="CHEBI:58703"/>
        <dbReference type="EC" id="1.7.1.13"/>
    </reaction>
</comment>
<comment type="pathway">
    <text evidence="1">tRNA modification; tRNA-queuosine biosynthesis.</text>
</comment>
<comment type="subcellular location">
    <subcellularLocation>
        <location evidence="1">Cytoplasm</location>
    </subcellularLocation>
</comment>
<comment type="similarity">
    <text evidence="1">Belongs to the GTP cyclohydrolase I family. QueF type 1 subfamily.</text>
</comment>
<evidence type="ECO:0000255" key="1">
    <source>
        <dbReference type="HAMAP-Rule" id="MF_00818"/>
    </source>
</evidence>
<dbReference type="EC" id="1.7.1.13" evidence="1"/>
<dbReference type="EMBL" id="BX842646">
    <property type="protein sequence ID" value="CAE77766.1"/>
    <property type="molecule type" value="Genomic_DNA"/>
</dbReference>
<dbReference type="RefSeq" id="WP_011162707.1">
    <property type="nucleotide sequence ID" value="NC_005363.1"/>
</dbReference>
<dbReference type="SMR" id="Q6MRJ2"/>
<dbReference type="STRING" id="264462.Bd0087"/>
<dbReference type="GeneID" id="93011238"/>
<dbReference type="KEGG" id="bba:Bd0087"/>
<dbReference type="eggNOG" id="COG0780">
    <property type="taxonomic scope" value="Bacteria"/>
</dbReference>
<dbReference type="HOGENOM" id="CLU_102489_0_1_7"/>
<dbReference type="UniPathway" id="UPA00392"/>
<dbReference type="Proteomes" id="UP000008080">
    <property type="component" value="Chromosome"/>
</dbReference>
<dbReference type="GO" id="GO:0005737">
    <property type="term" value="C:cytoplasm"/>
    <property type="evidence" value="ECO:0007669"/>
    <property type="project" value="UniProtKB-SubCell"/>
</dbReference>
<dbReference type="GO" id="GO:0033739">
    <property type="term" value="F:preQ1 synthase activity"/>
    <property type="evidence" value="ECO:0007669"/>
    <property type="project" value="UniProtKB-UniRule"/>
</dbReference>
<dbReference type="GO" id="GO:0008616">
    <property type="term" value="P:queuosine biosynthetic process"/>
    <property type="evidence" value="ECO:0007669"/>
    <property type="project" value="UniProtKB-UniRule"/>
</dbReference>
<dbReference type="GO" id="GO:0006400">
    <property type="term" value="P:tRNA modification"/>
    <property type="evidence" value="ECO:0007669"/>
    <property type="project" value="UniProtKB-UniRule"/>
</dbReference>
<dbReference type="Gene3D" id="3.30.1130.10">
    <property type="match status" value="1"/>
</dbReference>
<dbReference type="HAMAP" id="MF_00818">
    <property type="entry name" value="QueF_type1"/>
    <property type="match status" value="1"/>
</dbReference>
<dbReference type="InterPro" id="IPR043133">
    <property type="entry name" value="GTP-CH-I_C/QueF"/>
</dbReference>
<dbReference type="InterPro" id="IPR050084">
    <property type="entry name" value="NADPH_dep_7-cyano-7-deazaG_red"/>
</dbReference>
<dbReference type="InterPro" id="IPR029500">
    <property type="entry name" value="QueF"/>
</dbReference>
<dbReference type="InterPro" id="IPR016856">
    <property type="entry name" value="QueF_type1"/>
</dbReference>
<dbReference type="NCBIfam" id="TIGR03139">
    <property type="entry name" value="QueF-II"/>
    <property type="match status" value="1"/>
</dbReference>
<dbReference type="PANTHER" id="PTHR34354">
    <property type="entry name" value="NADPH-DEPENDENT 7-CYANO-7-DEAZAGUANINE REDUCTASE"/>
    <property type="match status" value="1"/>
</dbReference>
<dbReference type="PANTHER" id="PTHR34354:SF1">
    <property type="entry name" value="NADPH-DEPENDENT 7-CYANO-7-DEAZAGUANINE REDUCTASE"/>
    <property type="match status" value="1"/>
</dbReference>
<dbReference type="Pfam" id="PF14489">
    <property type="entry name" value="QueF"/>
    <property type="match status" value="1"/>
</dbReference>
<dbReference type="PIRSF" id="PIRSF027377">
    <property type="entry name" value="Nitrile_oxidored_QueF"/>
    <property type="match status" value="1"/>
</dbReference>
<dbReference type="SUPFAM" id="SSF55620">
    <property type="entry name" value="Tetrahydrobiopterin biosynthesis enzymes-like"/>
    <property type="match status" value="1"/>
</dbReference>
<name>QUEF_BDEBA</name>
<gene>
    <name evidence="1" type="primary">queF</name>
    <name type="ordered locus">Bd0087</name>
</gene>
<feature type="chain" id="PRO_0000162962" description="NADPH-dependent 7-cyano-7-deazaguanine reductase">
    <location>
        <begin position="1"/>
        <end position="170"/>
    </location>
</feature>
<feature type="active site" description="Thioimide intermediate" evidence="1">
    <location>
        <position position="58"/>
    </location>
</feature>
<feature type="active site" description="Proton donor" evidence="1">
    <location>
        <position position="65"/>
    </location>
</feature>
<feature type="binding site" evidence="1">
    <location>
        <begin position="80"/>
        <end position="82"/>
    </location>
    <ligand>
        <name>substrate</name>
    </ligand>
</feature>
<feature type="binding site" evidence="1">
    <location>
        <begin position="99"/>
        <end position="100"/>
    </location>
    <ligand>
        <name>substrate</name>
    </ligand>
</feature>